<organism>
    <name type="scientific">Yersinia enterocolitica serotype O:8 / biotype 1B (strain NCTC 13174 / 8081)</name>
    <dbReference type="NCBI Taxonomy" id="393305"/>
    <lineage>
        <taxon>Bacteria</taxon>
        <taxon>Pseudomonadati</taxon>
        <taxon>Pseudomonadota</taxon>
        <taxon>Gammaproteobacteria</taxon>
        <taxon>Enterobacterales</taxon>
        <taxon>Yersiniaceae</taxon>
        <taxon>Yersinia</taxon>
    </lineage>
</organism>
<gene>
    <name evidence="1" type="primary">rutD</name>
    <name type="ordered locus">YE1947</name>
</gene>
<feature type="chain" id="PRO_0000402987" description="Putative carbamate hydrolase RutD">
    <location>
        <begin position="1"/>
        <end position="278"/>
    </location>
</feature>
<keyword id="KW-0378">Hydrolase</keyword>
<evidence type="ECO:0000255" key="1">
    <source>
        <dbReference type="HAMAP-Rule" id="MF_00832"/>
    </source>
</evidence>
<protein>
    <recommendedName>
        <fullName evidence="1">Putative carbamate hydrolase RutD</fullName>
        <ecNumber evidence="1">3.5.1.-</ecNumber>
    </recommendedName>
    <alternativeName>
        <fullName evidence="1">Aminohydrolase</fullName>
    </alternativeName>
</protein>
<proteinExistence type="inferred from homology"/>
<sequence length="278" mass="30558">MYFEITGQNSPAAKTVVLSAGLGGSGRFWQPQLSALGQHFRVITYDQYGTGRSAGVIPSGYTLADMADELADLLASQHIERYHFVGHALGGMIGLQLALSHPQCVERLVAINSWPVLDSQTRRCFHVRQDLLLNSGVAAYVRAQPLFLYPADWLSRNTLLLEQEEVQQIAHFQGMENLLRRLNALMNADFRSVLPHITTPTLALCATDDLLVPYPCSQALAELLPDGEWAQMSYGGHAMSVTNSEQFNGILLSYLLMDTGIAKCELALNQSNTSAIHL</sequence>
<name>RUTD_YERE8</name>
<reference key="1">
    <citation type="journal article" date="2006" name="PLoS Genet.">
        <title>The complete genome sequence and comparative genome analysis of the high pathogenicity Yersinia enterocolitica strain 8081.</title>
        <authorList>
            <person name="Thomson N.R."/>
            <person name="Howard S."/>
            <person name="Wren B.W."/>
            <person name="Holden M.T.G."/>
            <person name="Crossman L."/>
            <person name="Challis G.L."/>
            <person name="Churcher C."/>
            <person name="Mungall K."/>
            <person name="Brooks K."/>
            <person name="Chillingworth T."/>
            <person name="Feltwell T."/>
            <person name="Abdellah Z."/>
            <person name="Hauser H."/>
            <person name="Jagels K."/>
            <person name="Maddison M."/>
            <person name="Moule S."/>
            <person name="Sanders M."/>
            <person name="Whitehead S."/>
            <person name="Quail M.A."/>
            <person name="Dougan G."/>
            <person name="Parkhill J."/>
            <person name="Prentice M.B."/>
        </authorList>
    </citation>
    <scope>NUCLEOTIDE SEQUENCE [LARGE SCALE GENOMIC DNA]</scope>
    <source>
        <strain>NCTC 13174 / 8081</strain>
    </source>
</reference>
<comment type="function">
    <text evidence="1">Involved in pyrimidine catabolism. May facilitate the hydrolysis of carbamate, a reaction that can also occur spontaneously.</text>
</comment>
<comment type="catalytic activity">
    <reaction evidence="1">
        <text>carbamate + 2 H(+) = NH4(+) + CO2</text>
        <dbReference type="Rhea" id="RHEA:15649"/>
        <dbReference type="ChEBI" id="CHEBI:13941"/>
        <dbReference type="ChEBI" id="CHEBI:15378"/>
        <dbReference type="ChEBI" id="CHEBI:16526"/>
        <dbReference type="ChEBI" id="CHEBI:28938"/>
    </reaction>
</comment>
<comment type="similarity">
    <text evidence="1">Belongs to the AB hydrolase superfamily. Hydrolase RutD family.</text>
</comment>
<accession>A1JMX1</accession>
<dbReference type="EC" id="3.5.1.-" evidence="1"/>
<dbReference type="EMBL" id="AM286415">
    <property type="protein sequence ID" value="CAL12026.1"/>
    <property type="molecule type" value="Genomic_DNA"/>
</dbReference>
<dbReference type="RefSeq" id="WP_005169992.1">
    <property type="nucleotide sequence ID" value="NC_008800.1"/>
</dbReference>
<dbReference type="RefSeq" id="YP_001006202.1">
    <property type="nucleotide sequence ID" value="NC_008800.1"/>
</dbReference>
<dbReference type="SMR" id="A1JMX1"/>
<dbReference type="ESTHER" id="yere8-a1jmx1">
    <property type="family name" value="RutD"/>
</dbReference>
<dbReference type="KEGG" id="yen:YE1947"/>
<dbReference type="PATRIC" id="fig|393305.7.peg.2104"/>
<dbReference type="eggNOG" id="COG2267">
    <property type="taxonomic scope" value="Bacteria"/>
</dbReference>
<dbReference type="HOGENOM" id="CLU_020336_50_1_6"/>
<dbReference type="OrthoDB" id="9804723at2"/>
<dbReference type="Proteomes" id="UP000000642">
    <property type="component" value="Chromosome"/>
</dbReference>
<dbReference type="GO" id="GO:0016811">
    <property type="term" value="F:hydrolase activity, acting on carbon-nitrogen (but not peptide) bonds, in linear amides"/>
    <property type="evidence" value="ECO:0007669"/>
    <property type="project" value="InterPro"/>
</dbReference>
<dbReference type="GO" id="GO:0019740">
    <property type="term" value="P:nitrogen utilization"/>
    <property type="evidence" value="ECO:0007669"/>
    <property type="project" value="UniProtKB-UniRule"/>
</dbReference>
<dbReference type="GO" id="GO:0006212">
    <property type="term" value="P:uracil catabolic process"/>
    <property type="evidence" value="ECO:0007669"/>
    <property type="project" value="UniProtKB-UniRule"/>
</dbReference>
<dbReference type="Gene3D" id="3.40.50.1820">
    <property type="entry name" value="alpha/beta hydrolase"/>
    <property type="match status" value="1"/>
</dbReference>
<dbReference type="HAMAP" id="MF_00832">
    <property type="entry name" value="RutD"/>
    <property type="match status" value="1"/>
</dbReference>
<dbReference type="InterPro" id="IPR050471">
    <property type="entry name" value="AB_hydrolase"/>
</dbReference>
<dbReference type="InterPro" id="IPR000073">
    <property type="entry name" value="AB_hydrolase_1"/>
</dbReference>
<dbReference type="InterPro" id="IPR029058">
    <property type="entry name" value="AB_hydrolase_fold"/>
</dbReference>
<dbReference type="InterPro" id="IPR019913">
    <property type="entry name" value="Pyrimidine_utilisation_RutD"/>
</dbReference>
<dbReference type="NCBIfam" id="TIGR03611">
    <property type="entry name" value="RutD"/>
    <property type="match status" value="1"/>
</dbReference>
<dbReference type="PANTHER" id="PTHR43433:SF5">
    <property type="entry name" value="AB HYDROLASE-1 DOMAIN-CONTAINING PROTEIN"/>
    <property type="match status" value="1"/>
</dbReference>
<dbReference type="PANTHER" id="PTHR43433">
    <property type="entry name" value="HYDROLASE, ALPHA/BETA FOLD FAMILY PROTEIN"/>
    <property type="match status" value="1"/>
</dbReference>
<dbReference type="Pfam" id="PF00561">
    <property type="entry name" value="Abhydrolase_1"/>
    <property type="match status" value="1"/>
</dbReference>
<dbReference type="PRINTS" id="PR00111">
    <property type="entry name" value="ABHYDROLASE"/>
</dbReference>
<dbReference type="SUPFAM" id="SSF53474">
    <property type="entry name" value="alpha/beta-Hydrolases"/>
    <property type="match status" value="1"/>
</dbReference>